<sequence length="498" mass="52650">MATCAADLAPLLGPVAANATDYLCNRFADTTSAVDATYLLFSAYLVFAMQLGFAMLCAGSVRAKNTMNIMLTNVLDAAAGALFYYLFGFAFAFGTPSNGFIGKQFFGLKHMPQTGFDYDFFLFQWAFAIAAAGITSGSIAERTQFVAYLIYSAFLTGFVYPVVSHWIWSADGWASASRTSGPLLFGSGVIDFAGSGVVHMVGGVAGLWGALIEGPRIGRFDHAGRSVALKGHSASLVVLGTFLLWFGWYGFNPGSFTTILKTYGPAGGINGQWSGVGRTAVTTTLAGSVAALTTLFGKRLQTGHWNVVDVCNGLLGGFAAITAGCSVVDPWAAIICGFVSAWVLIGLNALAARLKFDDPLEAAQLHGGCGAWGILFTALFARQKYVEEIYGAGRPYGLFMGGGGKLLAAHVIQILVIFGWVSCTMGPLFYGLKKLGLLRISAEDETSGMDLTRHGGFAYVYHDEDEHDKSGVGGFMLRSAQTRVEPAAAAASNSNNQV</sequence>
<gene>
    <name type="primary">AMT1-1</name>
    <name type="synonym">AMT1</name>
    <name type="ordered locus">Os04g0509600</name>
    <name type="ordered locus">LOC_Os04g43070</name>
    <name type="ORF">OsJ_15423</name>
    <name type="ORF">OSJNBb0065L13.7</name>
</gene>
<accession>Q7XQ12</accession>
<accession>A0A0P0WCB2</accession>
<accession>O04400</accession>
<accession>Q56UT5</accession>
<accession>Q947N1</accession>
<dbReference type="EMBL" id="AF001505">
    <property type="protein sequence ID" value="AAB58937.1"/>
    <property type="status" value="ALT_SEQ"/>
    <property type="molecule type" value="mRNA"/>
</dbReference>
<dbReference type="EMBL" id="AF289477">
    <property type="protein sequence ID" value="AAL05612.1"/>
    <property type="status" value="ALT_FRAME"/>
    <property type="molecule type" value="Genomic_DNA"/>
</dbReference>
<dbReference type="EMBL" id="AY569614">
    <property type="protein sequence ID" value="AAU84432.1"/>
    <property type="status" value="ALT_FRAME"/>
    <property type="molecule type" value="mRNA"/>
</dbReference>
<dbReference type="EMBL" id="AL606607">
    <property type="protein sequence ID" value="CAE03364.1"/>
    <property type="molecule type" value="Genomic_DNA"/>
</dbReference>
<dbReference type="EMBL" id="AP008210">
    <property type="protein sequence ID" value="BAF15194.1"/>
    <property type="molecule type" value="Genomic_DNA"/>
</dbReference>
<dbReference type="EMBL" id="AP014960">
    <property type="protein sequence ID" value="BAS90026.1"/>
    <property type="molecule type" value="Genomic_DNA"/>
</dbReference>
<dbReference type="EMBL" id="CM000141">
    <property type="protein sequence ID" value="EAZ31310.1"/>
    <property type="molecule type" value="Genomic_DNA"/>
</dbReference>
<dbReference type="EMBL" id="AK073718">
    <property type="protein sequence ID" value="BAG93605.1"/>
    <property type="molecule type" value="mRNA"/>
</dbReference>
<dbReference type="PIR" id="T03441">
    <property type="entry name" value="T03441"/>
</dbReference>
<dbReference type="RefSeq" id="XP_015636241.1">
    <property type="nucleotide sequence ID" value="XM_015780755.1"/>
</dbReference>
<dbReference type="SMR" id="Q7XQ12"/>
<dbReference type="FunCoup" id="Q7XQ12">
    <property type="interactions" value="52"/>
</dbReference>
<dbReference type="STRING" id="39947.Q7XQ12"/>
<dbReference type="PaxDb" id="39947-Q7XQ12"/>
<dbReference type="EnsemblPlants" id="Os04t0509600-01">
    <property type="protein sequence ID" value="Os04t0509600-01"/>
    <property type="gene ID" value="Os04g0509600"/>
</dbReference>
<dbReference type="Gramene" id="Os04t0509600-01">
    <property type="protein sequence ID" value="Os04t0509600-01"/>
    <property type="gene ID" value="Os04g0509600"/>
</dbReference>
<dbReference type="KEGG" id="dosa:Os04g0509600"/>
<dbReference type="eggNOG" id="KOG0682">
    <property type="taxonomic scope" value="Eukaryota"/>
</dbReference>
<dbReference type="InParanoid" id="Q7XQ12"/>
<dbReference type="OrthoDB" id="534912at2759"/>
<dbReference type="Proteomes" id="UP000000763">
    <property type="component" value="Chromosome 4"/>
</dbReference>
<dbReference type="Proteomes" id="UP000007752">
    <property type="component" value="Chromosome 4"/>
</dbReference>
<dbReference type="Proteomes" id="UP000059680">
    <property type="component" value="Chromosome 4"/>
</dbReference>
<dbReference type="ExpressionAtlas" id="Q7XQ12">
    <property type="expression patterns" value="baseline and differential"/>
</dbReference>
<dbReference type="GO" id="GO:0005886">
    <property type="term" value="C:plasma membrane"/>
    <property type="evidence" value="ECO:0000318"/>
    <property type="project" value="GO_Central"/>
</dbReference>
<dbReference type="GO" id="GO:0008519">
    <property type="term" value="F:ammonium channel activity"/>
    <property type="evidence" value="ECO:0000318"/>
    <property type="project" value="GO_Central"/>
</dbReference>
<dbReference type="GO" id="GO:0097272">
    <property type="term" value="P:ammonium homeostasis"/>
    <property type="evidence" value="ECO:0000318"/>
    <property type="project" value="GO_Central"/>
</dbReference>
<dbReference type="GO" id="GO:0072488">
    <property type="term" value="P:ammonium transmembrane transport"/>
    <property type="evidence" value="ECO:0000318"/>
    <property type="project" value="GO_Central"/>
</dbReference>
<dbReference type="FunFam" id="1.10.3430.10:FF:000006">
    <property type="entry name" value="Ammonium transporter"/>
    <property type="match status" value="1"/>
</dbReference>
<dbReference type="Gene3D" id="1.10.3430.10">
    <property type="entry name" value="Ammonium transporter AmtB like domains"/>
    <property type="match status" value="1"/>
</dbReference>
<dbReference type="InterPro" id="IPR029020">
    <property type="entry name" value="Ammonium/urea_transptr"/>
</dbReference>
<dbReference type="InterPro" id="IPR001905">
    <property type="entry name" value="Ammonium_transpt"/>
</dbReference>
<dbReference type="InterPro" id="IPR018047">
    <property type="entry name" value="Ammonium_transpt_CS"/>
</dbReference>
<dbReference type="InterPro" id="IPR024041">
    <property type="entry name" value="NH4_transpt_AmtB-like_dom"/>
</dbReference>
<dbReference type="NCBIfam" id="TIGR00836">
    <property type="entry name" value="amt"/>
    <property type="match status" value="1"/>
</dbReference>
<dbReference type="PANTHER" id="PTHR11730">
    <property type="entry name" value="AMMONIUM TRANSPORTER"/>
    <property type="match status" value="1"/>
</dbReference>
<dbReference type="PANTHER" id="PTHR11730:SF121">
    <property type="entry name" value="AMMONIUM TRANSPORTER 1 MEMBER 1"/>
    <property type="match status" value="1"/>
</dbReference>
<dbReference type="Pfam" id="PF00909">
    <property type="entry name" value="Ammonium_transp"/>
    <property type="match status" value="1"/>
</dbReference>
<dbReference type="SUPFAM" id="SSF111352">
    <property type="entry name" value="Ammonium transporter"/>
    <property type="match status" value="1"/>
</dbReference>
<dbReference type="PROSITE" id="PS01219">
    <property type="entry name" value="AMMONIUM_TRANSP"/>
    <property type="match status" value="1"/>
</dbReference>
<comment type="function">
    <text evidence="2 3">Ammonium transporter probably involved in ammonium uptake from the soil.</text>
</comment>
<comment type="subcellular location">
    <subcellularLocation>
        <location evidence="5">Membrane</location>
        <topology evidence="5">Multi-pass membrane protein</topology>
    </subcellularLocation>
</comment>
<comment type="tissue specificity">
    <text evidence="3">Expressed in roots and shoots.</text>
</comment>
<comment type="induction">
    <text evidence="3 4">By ammonium or glutamine supply in roots.</text>
</comment>
<comment type="similarity">
    <text evidence="5">Belongs to the ammonia transporter channel (TC 1.A.11.2) family.</text>
</comment>
<comment type="sequence caution" evidence="5">
    <conflict type="frameshift">
        <sequence resource="EMBL-CDS" id="AAB58937"/>
    </conflict>
</comment>
<comment type="sequence caution" evidence="5">
    <conflict type="miscellaneous discrepancy">
        <sequence resource="EMBL-CDS" id="AAB58937"/>
    </conflict>
    <text>Sequencing errors.</text>
</comment>
<comment type="sequence caution" evidence="5">
    <conflict type="frameshift">
        <sequence resource="EMBL-CDS" id="AAL05612"/>
    </conflict>
</comment>
<comment type="sequence caution" evidence="5">
    <conflict type="frameshift">
        <sequence resource="EMBL-CDS" id="AAU84432"/>
    </conflict>
</comment>
<proteinExistence type="evidence at transcript level"/>
<feature type="chain" id="PRO_0000385644" description="Ammonium transporter 1 member 1">
    <location>
        <begin position="1"/>
        <end position="498"/>
    </location>
</feature>
<feature type="transmembrane region" description="Helical" evidence="1">
    <location>
        <begin position="39"/>
        <end position="59"/>
    </location>
</feature>
<feature type="transmembrane region" description="Helical" evidence="1">
    <location>
        <begin position="74"/>
        <end position="94"/>
    </location>
</feature>
<feature type="transmembrane region" description="Helical" evidence="1">
    <location>
        <begin position="120"/>
        <end position="140"/>
    </location>
</feature>
<feature type="transmembrane region" description="Helical" evidence="1">
    <location>
        <begin position="148"/>
        <end position="168"/>
    </location>
</feature>
<feature type="transmembrane region" description="Helical" evidence="1">
    <location>
        <begin position="192"/>
        <end position="212"/>
    </location>
</feature>
<feature type="transmembrane region" description="Helical" evidence="1">
    <location>
        <begin position="236"/>
        <end position="256"/>
    </location>
</feature>
<feature type="transmembrane region" description="Helical" evidence="1">
    <location>
        <begin position="274"/>
        <end position="296"/>
    </location>
</feature>
<feature type="transmembrane region" description="Helical" evidence="1">
    <location>
        <begin position="307"/>
        <end position="327"/>
    </location>
</feature>
<feature type="transmembrane region" description="Helical" evidence="1">
    <location>
        <begin position="331"/>
        <end position="351"/>
    </location>
</feature>
<feature type="transmembrane region" description="Helical" evidence="1">
    <location>
        <begin position="360"/>
        <end position="380"/>
    </location>
</feature>
<feature type="transmembrane region" description="Helical" evidence="1">
    <location>
        <begin position="411"/>
        <end position="431"/>
    </location>
</feature>
<feature type="sequence conflict" description="In Ref. 3; AAU84432." evidence="5" ref="3">
    <original>F</original>
    <variation>S</variation>
    <location>
        <position position="256"/>
    </location>
</feature>
<evidence type="ECO:0000255" key="1"/>
<evidence type="ECO:0000269" key="2">
    <source>
    </source>
</evidence>
<evidence type="ECO:0000269" key="3">
    <source>
    </source>
</evidence>
<evidence type="ECO:0000269" key="4">
    <source>
    </source>
</evidence>
<evidence type="ECO:0000305" key="5"/>
<protein>
    <recommendedName>
        <fullName>Ammonium transporter 1 member 1</fullName>
        <shortName>OsAMT1;1</shortName>
    </recommendedName>
</protein>
<reference key="1">
    <citation type="submission" date="1997-04" db="EMBL/GenBank/DDBJ databases">
        <title>OsAMT1-1, a putative ammonium transporter cDNA from rice.</title>
        <authorList>
            <person name="von Wiren N."/>
            <person name="Bergfeld A."/>
            <person name="Ninnemann O."/>
            <person name="Frommer W.B."/>
        </authorList>
    </citation>
    <scope>NUCLEOTIDE SEQUENCE [MRNA]</scope>
    <source>
        <strain>cv. Nipponbare</strain>
        <tissue>Root</tissue>
    </source>
</reference>
<reference key="2">
    <citation type="submission" date="2000-07" db="EMBL/GenBank/DDBJ databases">
        <title>Cloning and characterization of three ammonium transporter genes from rice.</title>
        <authorList>
            <person name="Hoque M.S."/>
            <person name="Masle J."/>
            <person name="Udvardi M.K."/>
            <person name="Upadhyaya N.M."/>
        </authorList>
    </citation>
    <scope>NUCLEOTIDE SEQUENCE [GENOMIC DNA]</scope>
</reference>
<reference key="3">
    <citation type="submission" date="2004-03" db="EMBL/GenBank/DDBJ databases">
        <title>Regulation of rice OsAMT gene expression by nutrient availability.</title>
        <authorList>
            <person name="Yun S.J."/>
            <person name="Baek S.-H."/>
            <person name="Park M.-R."/>
            <person name="Park M.-H."/>
            <person name="Lim J.-H."/>
            <person name="Kook H.-S."/>
        </authorList>
    </citation>
    <scope>NUCLEOTIDE SEQUENCE [MRNA]</scope>
    <source>
        <strain>cv. Dongjin</strain>
    </source>
</reference>
<reference key="4">
    <citation type="journal article" date="2002" name="Nature">
        <title>Sequence and analysis of rice chromosome 4.</title>
        <authorList>
            <person name="Feng Q."/>
            <person name="Zhang Y."/>
            <person name="Hao P."/>
            <person name="Wang S."/>
            <person name="Fu G."/>
            <person name="Huang Y."/>
            <person name="Li Y."/>
            <person name="Zhu J."/>
            <person name="Liu Y."/>
            <person name="Hu X."/>
            <person name="Jia P."/>
            <person name="Zhang Y."/>
            <person name="Zhao Q."/>
            <person name="Ying K."/>
            <person name="Yu S."/>
            <person name="Tang Y."/>
            <person name="Weng Q."/>
            <person name="Zhang L."/>
            <person name="Lu Y."/>
            <person name="Mu J."/>
            <person name="Lu Y."/>
            <person name="Zhang L.S."/>
            <person name="Yu Z."/>
            <person name="Fan D."/>
            <person name="Liu X."/>
            <person name="Lu T."/>
            <person name="Li C."/>
            <person name="Wu Y."/>
            <person name="Sun T."/>
            <person name="Lei H."/>
            <person name="Li T."/>
            <person name="Hu H."/>
            <person name="Guan J."/>
            <person name="Wu M."/>
            <person name="Zhang R."/>
            <person name="Zhou B."/>
            <person name="Chen Z."/>
            <person name="Chen L."/>
            <person name="Jin Z."/>
            <person name="Wang R."/>
            <person name="Yin H."/>
            <person name="Cai Z."/>
            <person name="Ren S."/>
            <person name="Lv G."/>
            <person name="Gu W."/>
            <person name="Zhu G."/>
            <person name="Tu Y."/>
            <person name="Jia J."/>
            <person name="Zhang Y."/>
            <person name="Chen J."/>
            <person name="Kang H."/>
            <person name="Chen X."/>
            <person name="Shao C."/>
            <person name="Sun Y."/>
            <person name="Hu Q."/>
            <person name="Zhang X."/>
            <person name="Zhang W."/>
            <person name="Wang L."/>
            <person name="Ding C."/>
            <person name="Sheng H."/>
            <person name="Gu J."/>
            <person name="Chen S."/>
            <person name="Ni L."/>
            <person name="Zhu F."/>
            <person name="Chen W."/>
            <person name="Lan L."/>
            <person name="Lai Y."/>
            <person name="Cheng Z."/>
            <person name="Gu M."/>
            <person name="Jiang J."/>
            <person name="Li J."/>
            <person name="Hong G."/>
            <person name="Xue Y."/>
            <person name="Han B."/>
        </authorList>
    </citation>
    <scope>NUCLEOTIDE SEQUENCE [LARGE SCALE GENOMIC DNA]</scope>
    <source>
        <strain>cv. Nipponbare</strain>
    </source>
</reference>
<reference key="5">
    <citation type="journal article" date="2005" name="Nature">
        <title>The map-based sequence of the rice genome.</title>
        <authorList>
            <consortium name="International rice genome sequencing project (IRGSP)"/>
        </authorList>
    </citation>
    <scope>NUCLEOTIDE SEQUENCE [LARGE SCALE GENOMIC DNA]</scope>
    <source>
        <strain>cv. Nipponbare</strain>
    </source>
</reference>
<reference key="6">
    <citation type="journal article" date="2008" name="Nucleic Acids Res.">
        <title>The rice annotation project database (RAP-DB): 2008 update.</title>
        <authorList>
            <consortium name="The rice annotation project (RAP)"/>
        </authorList>
    </citation>
    <scope>GENOME REANNOTATION</scope>
    <source>
        <strain>cv. Nipponbare</strain>
    </source>
</reference>
<reference key="7">
    <citation type="journal article" date="2013" name="Rice">
        <title>Improvement of the Oryza sativa Nipponbare reference genome using next generation sequence and optical map data.</title>
        <authorList>
            <person name="Kawahara Y."/>
            <person name="de la Bastide M."/>
            <person name="Hamilton J.P."/>
            <person name="Kanamori H."/>
            <person name="McCombie W.R."/>
            <person name="Ouyang S."/>
            <person name="Schwartz D.C."/>
            <person name="Tanaka T."/>
            <person name="Wu J."/>
            <person name="Zhou S."/>
            <person name="Childs K.L."/>
            <person name="Davidson R.M."/>
            <person name="Lin H."/>
            <person name="Quesada-Ocampo L."/>
            <person name="Vaillancourt B."/>
            <person name="Sakai H."/>
            <person name="Lee S.S."/>
            <person name="Kim J."/>
            <person name="Numa H."/>
            <person name="Itoh T."/>
            <person name="Buell C.R."/>
            <person name="Matsumoto T."/>
        </authorList>
    </citation>
    <scope>GENOME REANNOTATION</scope>
    <source>
        <strain>cv. Nipponbare</strain>
    </source>
</reference>
<reference key="8">
    <citation type="journal article" date="2005" name="PLoS Biol.">
        <title>The genomes of Oryza sativa: a history of duplications.</title>
        <authorList>
            <person name="Yu J."/>
            <person name="Wang J."/>
            <person name="Lin W."/>
            <person name="Li S."/>
            <person name="Li H."/>
            <person name="Zhou J."/>
            <person name="Ni P."/>
            <person name="Dong W."/>
            <person name="Hu S."/>
            <person name="Zeng C."/>
            <person name="Zhang J."/>
            <person name="Zhang Y."/>
            <person name="Li R."/>
            <person name="Xu Z."/>
            <person name="Li S."/>
            <person name="Li X."/>
            <person name="Zheng H."/>
            <person name="Cong L."/>
            <person name="Lin L."/>
            <person name="Yin J."/>
            <person name="Geng J."/>
            <person name="Li G."/>
            <person name="Shi J."/>
            <person name="Liu J."/>
            <person name="Lv H."/>
            <person name="Li J."/>
            <person name="Wang J."/>
            <person name="Deng Y."/>
            <person name="Ran L."/>
            <person name="Shi X."/>
            <person name="Wang X."/>
            <person name="Wu Q."/>
            <person name="Li C."/>
            <person name="Ren X."/>
            <person name="Wang J."/>
            <person name="Wang X."/>
            <person name="Li D."/>
            <person name="Liu D."/>
            <person name="Zhang X."/>
            <person name="Ji Z."/>
            <person name="Zhao W."/>
            <person name="Sun Y."/>
            <person name="Zhang Z."/>
            <person name="Bao J."/>
            <person name="Han Y."/>
            <person name="Dong L."/>
            <person name="Ji J."/>
            <person name="Chen P."/>
            <person name="Wu S."/>
            <person name="Liu J."/>
            <person name="Xiao Y."/>
            <person name="Bu D."/>
            <person name="Tan J."/>
            <person name="Yang L."/>
            <person name="Ye C."/>
            <person name="Zhang J."/>
            <person name="Xu J."/>
            <person name="Zhou Y."/>
            <person name="Yu Y."/>
            <person name="Zhang B."/>
            <person name="Zhuang S."/>
            <person name="Wei H."/>
            <person name="Liu B."/>
            <person name="Lei M."/>
            <person name="Yu H."/>
            <person name="Li Y."/>
            <person name="Xu H."/>
            <person name="Wei S."/>
            <person name="He X."/>
            <person name="Fang L."/>
            <person name="Zhang Z."/>
            <person name="Zhang Y."/>
            <person name="Huang X."/>
            <person name="Su Z."/>
            <person name="Tong W."/>
            <person name="Li J."/>
            <person name="Tong Z."/>
            <person name="Li S."/>
            <person name="Ye J."/>
            <person name="Wang L."/>
            <person name="Fang L."/>
            <person name="Lei T."/>
            <person name="Chen C.-S."/>
            <person name="Chen H.-C."/>
            <person name="Xu Z."/>
            <person name="Li H."/>
            <person name="Huang H."/>
            <person name="Zhang F."/>
            <person name="Xu H."/>
            <person name="Li N."/>
            <person name="Zhao C."/>
            <person name="Li S."/>
            <person name="Dong L."/>
            <person name="Huang Y."/>
            <person name="Li L."/>
            <person name="Xi Y."/>
            <person name="Qi Q."/>
            <person name="Li W."/>
            <person name="Zhang B."/>
            <person name="Hu W."/>
            <person name="Zhang Y."/>
            <person name="Tian X."/>
            <person name="Jiao Y."/>
            <person name="Liang X."/>
            <person name="Jin J."/>
            <person name="Gao L."/>
            <person name="Zheng W."/>
            <person name="Hao B."/>
            <person name="Liu S.-M."/>
            <person name="Wang W."/>
            <person name="Yuan L."/>
            <person name="Cao M."/>
            <person name="McDermott J."/>
            <person name="Samudrala R."/>
            <person name="Wang J."/>
            <person name="Wong G.K.-S."/>
            <person name="Yang H."/>
        </authorList>
    </citation>
    <scope>NUCLEOTIDE SEQUENCE [LARGE SCALE GENOMIC DNA]</scope>
    <source>
        <strain>cv. Nipponbare</strain>
    </source>
</reference>
<reference key="9">
    <citation type="journal article" date="2003" name="Science">
        <title>Collection, mapping, and annotation of over 28,000 cDNA clones from japonica rice.</title>
        <authorList>
            <consortium name="The rice full-length cDNA consortium"/>
        </authorList>
    </citation>
    <scope>NUCLEOTIDE SEQUENCE [LARGE SCALE MRNA]</scope>
    <source>
        <strain>cv. Nipponbare</strain>
    </source>
</reference>
<reference key="10">
    <citation type="journal article" date="2003" name="Plant Cell Physiol.">
        <title>Constitutive expression of a novel-type ammonium transporter OsAMT2 in rice plants.</title>
        <authorList>
            <person name="Suenaga A."/>
            <person name="Moriya K."/>
            <person name="Sonoda Y."/>
            <person name="Ikeda A."/>
            <person name="von Wiren N."/>
            <person name="Hayakawa T."/>
            <person name="Yamaguchi J."/>
            <person name="Yamaya T."/>
        </authorList>
    </citation>
    <scope>FUNCTION</scope>
</reference>
<reference key="11">
    <citation type="journal article" date="2003" name="Plant Cell Physiol.">
        <title>Distinct expression and function of three ammonium transporter genes (OsAMT1;1-1;3) in rice.</title>
        <authorList>
            <person name="Sonoda Y."/>
            <person name="Ikeda A."/>
            <person name="Saiki S."/>
            <person name="von Wiren N."/>
            <person name="Yamaya T."/>
            <person name="Yamaguchi J."/>
        </authorList>
    </citation>
    <scope>FUNCTION</scope>
    <scope>TISSUE SPECIFICITY</scope>
    <scope>INDUCTION</scope>
</reference>
<reference key="12">
    <citation type="journal article" date="2003" name="Plant Cell Physiol.">
        <title>Feedback regulation of the ammonium transporter gene family AMT1 by glutamine in rice.</title>
        <authorList>
            <person name="Sonoda Y."/>
            <person name="Ikeda A."/>
            <person name="Saiki S."/>
            <person name="Yamaya T."/>
            <person name="Yamaguchi J."/>
        </authorList>
    </citation>
    <scope>INDUCTION</scope>
</reference>
<name>AMT11_ORYSJ</name>
<organism>
    <name type="scientific">Oryza sativa subsp. japonica</name>
    <name type="common">Rice</name>
    <dbReference type="NCBI Taxonomy" id="39947"/>
    <lineage>
        <taxon>Eukaryota</taxon>
        <taxon>Viridiplantae</taxon>
        <taxon>Streptophyta</taxon>
        <taxon>Embryophyta</taxon>
        <taxon>Tracheophyta</taxon>
        <taxon>Spermatophyta</taxon>
        <taxon>Magnoliopsida</taxon>
        <taxon>Liliopsida</taxon>
        <taxon>Poales</taxon>
        <taxon>Poaceae</taxon>
        <taxon>BOP clade</taxon>
        <taxon>Oryzoideae</taxon>
        <taxon>Oryzeae</taxon>
        <taxon>Oryzinae</taxon>
        <taxon>Oryza</taxon>
        <taxon>Oryza sativa</taxon>
    </lineage>
</organism>
<keyword id="KW-0924">Ammonia transport</keyword>
<keyword id="KW-0472">Membrane</keyword>
<keyword id="KW-1185">Reference proteome</keyword>
<keyword id="KW-0812">Transmembrane</keyword>
<keyword id="KW-1133">Transmembrane helix</keyword>
<keyword id="KW-0813">Transport</keyword>